<dbReference type="EC" id="6.1.1.7" evidence="1"/>
<dbReference type="EMBL" id="CP000539">
    <property type="protein sequence ID" value="ABM42155.1"/>
    <property type="molecule type" value="Genomic_DNA"/>
</dbReference>
<dbReference type="SMR" id="A1W7D0"/>
<dbReference type="STRING" id="232721.Ajs_1979"/>
<dbReference type="KEGG" id="ajs:Ajs_1979"/>
<dbReference type="eggNOG" id="COG0013">
    <property type="taxonomic scope" value="Bacteria"/>
</dbReference>
<dbReference type="HOGENOM" id="CLU_004485_1_1_4"/>
<dbReference type="Proteomes" id="UP000000645">
    <property type="component" value="Chromosome"/>
</dbReference>
<dbReference type="GO" id="GO:0005829">
    <property type="term" value="C:cytosol"/>
    <property type="evidence" value="ECO:0007669"/>
    <property type="project" value="TreeGrafter"/>
</dbReference>
<dbReference type="GO" id="GO:0004813">
    <property type="term" value="F:alanine-tRNA ligase activity"/>
    <property type="evidence" value="ECO:0007669"/>
    <property type="project" value="UniProtKB-UniRule"/>
</dbReference>
<dbReference type="GO" id="GO:0002161">
    <property type="term" value="F:aminoacyl-tRNA deacylase activity"/>
    <property type="evidence" value="ECO:0007669"/>
    <property type="project" value="TreeGrafter"/>
</dbReference>
<dbReference type="GO" id="GO:0005524">
    <property type="term" value="F:ATP binding"/>
    <property type="evidence" value="ECO:0007669"/>
    <property type="project" value="UniProtKB-UniRule"/>
</dbReference>
<dbReference type="GO" id="GO:0000049">
    <property type="term" value="F:tRNA binding"/>
    <property type="evidence" value="ECO:0007669"/>
    <property type="project" value="UniProtKB-KW"/>
</dbReference>
<dbReference type="GO" id="GO:0008270">
    <property type="term" value="F:zinc ion binding"/>
    <property type="evidence" value="ECO:0007669"/>
    <property type="project" value="UniProtKB-UniRule"/>
</dbReference>
<dbReference type="GO" id="GO:0006419">
    <property type="term" value="P:alanyl-tRNA aminoacylation"/>
    <property type="evidence" value="ECO:0007669"/>
    <property type="project" value="UniProtKB-UniRule"/>
</dbReference>
<dbReference type="GO" id="GO:0045892">
    <property type="term" value="P:negative regulation of DNA-templated transcription"/>
    <property type="evidence" value="ECO:0007669"/>
    <property type="project" value="TreeGrafter"/>
</dbReference>
<dbReference type="CDD" id="cd00673">
    <property type="entry name" value="AlaRS_core"/>
    <property type="match status" value="1"/>
</dbReference>
<dbReference type="FunFam" id="2.40.30.130:FF:000001">
    <property type="entry name" value="Alanine--tRNA ligase"/>
    <property type="match status" value="1"/>
</dbReference>
<dbReference type="FunFam" id="3.10.310.40:FF:000001">
    <property type="entry name" value="Alanine--tRNA ligase"/>
    <property type="match status" value="1"/>
</dbReference>
<dbReference type="FunFam" id="3.30.54.20:FF:000001">
    <property type="entry name" value="Alanine--tRNA ligase"/>
    <property type="match status" value="1"/>
</dbReference>
<dbReference type="FunFam" id="3.30.930.10:FF:000004">
    <property type="entry name" value="Alanine--tRNA ligase"/>
    <property type="match status" value="1"/>
</dbReference>
<dbReference type="FunFam" id="3.30.980.10:FF:000004">
    <property type="entry name" value="Alanine--tRNA ligase, cytoplasmic"/>
    <property type="match status" value="1"/>
</dbReference>
<dbReference type="Gene3D" id="2.40.30.130">
    <property type="match status" value="1"/>
</dbReference>
<dbReference type="Gene3D" id="3.10.310.40">
    <property type="match status" value="1"/>
</dbReference>
<dbReference type="Gene3D" id="3.30.54.20">
    <property type="match status" value="1"/>
</dbReference>
<dbReference type="Gene3D" id="6.10.250.550">
    <property type="match status" value="1"/>
</dbReference>
<dbReference type="Gene3D" id="3.30.930.10">
    <property type="entry name" value="Bira Bifunctional Protein, Domain 2"/>
    <property type="match status" value="1"/>
</dbReference>
<dbReference type="Gene3D" id="3.30.980.10">
    <property type="entry name" value="Threonyl-trna Synthetase, Chain A, domain 2"/>
    <property type="match status" value="1"/>
</dbReference>
<dbReference type="HAMAP" id="MF_00036_B">
    <property type="entry name" value="Ala_tRNA_synth_B"/>
    <property type="match status" value="1"/>
</dbReference>
<dbReference type="InterPro" id="IPR045864">
    <property type="entry name" value="aa-tRNA-synth_II/BPL/LPL"/>
</dbReference>
<dbReference type="InterPro" id="IPR002318">
    <property type="entry name" value="Ala-tRNA-lgiase_IIc"/>
</dbReference>
<dbReference type="InterPro" id="IPR018162">
    <property type="entry name" value="Ala-tRNA-ligase_IIc_anticod-bd"/>
</dbReference>
<dbReference type="InterPro" id="IPR018165">
    <property type="entry name" value="Ala-tRNA-synth_IIc_core"/>
</dbReference>
<dbReference type="InterPro" id="IPR018164">
    <property type="entry name" value="Ala-tRNA-synth_IIc_N"/>
</dbReference>
<dbReference type="InterPro" id="IPR050058">
    <property type="entry name" value="Ala-tRNA_ligase"/>
</dbReference>
<dbReference type="InterPro" id="IPR023033">
    <property type="entry name" value="Ala_tRNA_ligase_euk/bac"/>
</dbReference>
<dbReference type="InterPro" id="IPR003156">
    <property type="entry name" value="DHHA1_dom"/>
</dbReference>
<dbReference type="InterPro" id="IPR018163">
    <property type="entry name" value="Thr/Ala-tRNA-synth_IIc_edit"/>
</dbReference>
<dbReference type="InterPro" id="IPR009000">
    <property type="entry name" value="Transl_B-barrel_sf"/>
</dbReference>
<dbReference type="InterPro" id="IPR012947">
    <property type="entry name" value="tRNA_SAD"/>
</dbReference>
<dbReference type="NCBIfam" id="TIGR00344">
    <property type="entry name" value="alaS"/>
    <property type="match status" value="1"/>
</dbReference>
<dbReference type="PANTHER" id="PTHR11777:SF9">
    <property type="entry name" value="ALANINE--TRNA LIGASE, CYTOPLASMIC"/>
    <property type="match status" value="1"/>
</dbReference>
<dbReference type="PANTHER" id="PTHR11777">
    <property type="entry name" value="ALANYL-TRNA SYNTHETASE"/>
    <property type="match status" value="1"/>
</dbReference>
<dbReference type="Pfam" id="PF02272">
    <property type="entry name" value="DHHA1"/>
    <property type="match status" value="1"/>
</dbReference>
<dbReference type="Pfam" id="PF01411">
    <property type="entry name" value="tRNA-synt_2c"/>
    <property type="match status" value="1"/>
</dbReference>
<dbReference type="Pfam" id="PF07973">
    <property type="entry name" value="tRNA_SAD"/>
    <property type="match status" value="1"/>
</dbReference>
<dbReference type="PRINTS" id="PR00980">
    <property type="entry name" value="TRNASYNTHALA"/>
</dbReference>
<dbReference type="SMART" id="SM00863">
    <property type="entry name" value="tRNA_SAD"/>
    <property type="match status" value="1"/>
</dbReference>
<dbReference type="SUPFAM" id="SSF55681">
    <property type="entry name" value="Class II aaRS and biotin synthetases"/>
    <property type="match status" value="1"/>
</dbReference>
<dbReference type="SUPFAM" id="SSF101353">
    <property type="entry name" value="Putative anticodon-binding domain of alanyl-tRNA synthetase (AlaRS)"/>
    <property type="match status" value="1"/>
</dbReference>
<dbReference type="SUPFAM" id="SSF55186">
    <property type="entry name" value="ThrRS/AlaRS common domain"/>
    <property type="match status" value="1"/>
</dbReference>
<dbReference type="SUPFAM" id="SSF50447">
    <property type="entry name" value="Translation proteins"/>
    <property type="match status" value="1"/>
</dbReference>
<dbReference type="PROSITE" id="PS50860">
    <property type="entry name" value="AA_TRNA_LIGASE_II_ALA"/>
    <property type="match status" value="1"/>
</dbReference>
<keyword id="KW-0030">Aminoacyl-tRNA synthetase</keyword>
<keyword id="KW-0067">ATP-binding</keyword>
<keyword id="KW-0963">Cytoplasm</keyword>
<keyword id="KW-0436">Ligase</keyword>
<keyword id="KW-0479">Metal-binding</keyword>
<keyword id="KW-0547">Nucleotide-binding</keyword>
<keyword id="KW-0648">Protein biosynthesis</keyword>
<keyword id="KW-0694">RNA-binding</keyword>
<keyword id="KW-0820">tRNA-binding</keyword>
<keyword id="KW-0862">Zinc</keyword>
<protein>
    <recommendedName>
        <fullName evidence="1">Alanine--tRNA ligase</fullName>
        <ecNumber evidence="1">6.1.1.7</ecNumber>
    </recommendedName>
    <alternativeName>
        <fullName evidence="1">Alanyl-tRNA synthetase</fullName>
        <shortName evidence="1">AlaRS</shortName>
    </alternativeName>
</protein>
<organism>
    <name type="scientific">Acidovorax sp. (strain JS42)</name>
    <dbReference type="NCBI Taxonomy" id="232721"/>
    <lineage>
        <taxon>Bacteria</taxon>
        <taxon>Pseudomonadati</taxon>
        <taxon>Pseudomonadota</taxon>
        <taxon>Betaproteobacteria</taxon>
        <taxon>Burkholderiales</taxon>
        <taxon>Comamonadaceae</taxon>
        <taxon>Acidovorax</taxon>
    </lineage>
</organism>
<name>SYA_ACISJ</name>
<reference key="1">
    <citation type="submission" date="2006-12" db="EMBL/GenBank/DDBJ databases">
        <title>Complete sequence of chromosome 1 of Acidovorax sp. JS42.</title>
        <authorList>
            <person name="Copeland A."/>
            <person name="Lucas S."/>
            <person name="Lapidus A."/>
            <person name="Barry K."/>
            <person name="Detter J.C."/>
            <person name="Glavina del Rio T."/>
            <person name="Dalin E."/>
            <person name="Tice H."/>
            <person name="Pitluck S."/>
            <person name="Chertkov O."/>
            <person name="Brettin T."/>
            <person name="Bruce D."/>
            <person name="Han C."/>
            <person name="Tapia R."/>
            <person name="Gilna P."/>
            <person name="Schmutz J."/>
            <person name="Larimer F."/>
            <person name="Land M."/>
            <person name="Hauser L."/>
            <person name="Kyrpides N."/>
            <person name="Kim E."/>
            <person name="Stahl D."/>
            <person name="Richardson P."/>
        </authorList>
    </citation>
    <scope>NUCLEOTIDE SEQUENCE [LARGE SCALE GENOMIC DNA]</scope>
    <source>
        <strain>JS42</strain>
    </source>
</reference>
<evidence type="ECO:0000255" key="1">
    <source>
        <dbReference type="HAMAP-Rule" id="MF_00036"/>
    </source>
</evidence>
<proteinExistence type="inferred from homology"/>
<feature type="chain" id="PRO_0000347472" description="Alanine--tRNA ligase">
    <location>
        <begin position="1"/>
        <end position="874"/>
    </location>
</feature>
<feature type="binding site" evidence="1">
    <location>
        <position position="564"/>
    </location>
    <ligand>
        <name>Zn(2+)</name>
        <dbReference type="ChEBI" id="CHEBI:29105"/>
    </ligand>
</feature>
<feature type="binding site" evidence="1">
    <location>
        <position position="568"/>
    </location>
    <ligand>
        <name>Zn(2+)</name>
        <dbReference type="ChEBI" id="CHEBI:29105"/>
    </ligand>
</feature>
<feature type="binding site" evidence="1">
    <location>
        <position position="665"/>
    </location>
    <ligand>
        <name>Zn(2+)</name>
        <dbReference type="ChEBI" id="CHEBI:29105"/>
    </ligand>
</feature>
<feature type="binding site" evidence="1">
    <location>
        <position position="669"/>
    </location>
    <ligand>
        <name>Zn(2+)</name>
        <dbReference type="ChEBI" id="CHEBI:29105"/>
    </ligand>
</feature>
<comment type="function">
    <text evidence="1">Catalyzes the attachment of alanine to tRNA(Ala) in a two-step reaction: alanine is first activated by ATP to form Ala-AMP and then transferred to the acceptor end of tRNA(Ala). Also edits incorrectly charged Ser-tRNA(Ala) and Gly-tRNA(Ala) via its editing domain.</text>
</comment>
<comment type="catalytic activity">
    <reaction evidence="1">
        <text>tRNA(Ala) + L-alanine + ATP = L-alanyl-tRNA(Ala) + AMP + diphosphate</text>
        <dbReference type="Rhea" id="RHEA:12540"/>
        <dbReference type="Rhea" id="RHEA-COMP:9657"/>
        <dbReference type="Rhea" id="RHEA-COMP:9923"/>
        <dbReference type="ChEBI" id="CHEBI:30616"/>
        <dbReference type="ChEBI" id="CHEBI:33019"/>
        <dbReference type="ChEBI" id="CHEBI:57972"/>
        <dbReference type="ChEBI" id="CHEBI:78442"/>
        <dbReference type="ChEBI" id="CHEBI:78497"/>
        <dbReference type="ChEBI" id="CHEBI:456215"/>
        <dbReference type="EC" id="6.1.1.7"/>
    </reaction>
</comment>
<comment type="cofactor">
    <cofactor evidence="1">
        <name>Zn(2+)</name>
        <dbReference type="ChEBI" id="CHEBI:29105"/>
    </cofactor>
    <text evidence="1">Binds 1 zinc ion per subunit.</text>
</comment>
<comment type="subcellular location">
    <subcellularLocation>
        <location evidence="1">Cytoplasm</location>
    </subcellularLocation>
</comment>
<comment type="domain">
    <text evidence="1">Consists of three domains; the N-terminal catalytic domain, the editing domain and the C-terminal C-Ala domain. The editing domain removes incorrectly charged amino acids, while the C-Ala domain, along with tRNA(Ala), serves as a bridge to cooperatively bring together the editing and aminoacylation centers thus stimulating deacylation of misacylated tRNAs.</text>
</comment>
<comment type="similarity">
    <text evidence="1">Belongs to the class-II aminoacyl-tRNA synthetase family.</text>
</comment>
<sequence length="874" mass="94392">MSTPTFSVADIRKTFLDFFAAKGHTVVASSPLVPGNDPTLMFTNSGMVQFKDVFLGTDKRPYVRATSVQTCLRAGGKHNDLENVGYTARHHTFFEMLGNWSFGDYFKRESLKWAWELLTEVYKLPPERLLATVYAEDDEAYDIWTKEIGLPPERVIRIGDNKGGRYKSDNFWMMADTGPCGPCSEIFYDHGEHIAGGPPGSPDEDGDRFIEIWNNVFMQFDMDEQGNVKPLPAPCVDTGMGLERLAAILQHVHSNYEIDLFDALIKAAARETGTSDLTNPSLKVIADHIRATAFLVADGVIPSNEGRGYVQRRIVRRAIRHGYKLGRKTPFFHKLVQDLVQQMGDAYPKIREQQARITDVLRVEEERFFETLAHGMEILDSALAGGAKTLPGDVAFKLHDTYGFPLDLTNDVCRERGVNVDEAGFATAMEHQKSTARAAGKFKMDRALEYTGAANQFTGYEQLAESAKIVALYVDGTSTAALHAGQSGVVVLDRTPFYAESGGQVGDQGTIGAGSACFTVADTQKIKADVYGHHGTLEAGTLNVGDTVQAQVDLQLRAATMRNHSVTHLMHKALREVLGDHVQQKGSLVNAERTRFDFAHNAPLTAAQIREIERLVNAEVLANTDTNARLMDIESAQKTGAMMLFGEKYGETVRVLDIGTSRELCGGTHVRRTGDIGLFKVVAEGGVAAGVRRIEAVTGENALAYLQSLESTVDQAAAALKAPPAELTARIGGALDQIKTLEKELAALKGKLASSQGDELAGQAVDVKGIKVLAARLEGADAKTLRETMDKLKDKLKTAAIVLAAVDGDKVQLAAGVTADSIGRVKAGDLVNFVAAQVGGKGGGKPDMAMAGGTNAAALPQALAAVQGWVGERI</sequence>
<accession>A1W7D0</accession>
<gene>
    <name evidence="1" type="primary">alaS</name>
    <name type="ordered locus">Ajs_1979</name>
</gene>